<keyword id="KW-0012">Acyltransferase</keyword>
<keyword id="KW-0963">Cytoplasm</keyword>
<keyword id="KW-0441">Lipid A biosynthesis</keyword>
<keyword id="KW-0444">Lipid biosynthesis</keyword>
<keyword id="KW-0443">Lipid metabolism</keyword>
<keyword id="KW-1185">Reference proteome</keyword>
<keyword id="KW-0677">Repeat</keyword>
<keyword id="KW-0808">Transferase</keyword>
<dbReference type="EC" id="2.3.1.129" evidence="1"/>
<dbReference type="EMBL" id="CP000270">
    <property type="protein sequence ID" value="ABE31261.1"/>
    <property type="molecule type" value="Genomic_DNA"/>
</dbReference>
<dbReference type="RefSeq" id="WP_011488857.1">
    <property type="nucleotide sequence ID" value="NC_007951.1"/>
</dbReference>
<dbReference type="SMR" id="Q13XC8"/>
<dbReference type="STRING" id="266265.Bxe_A1694"/>
<dbReference type="KEGG" id="bxb:DR64_3859"/>
<dbReference type="KEGG" id="bxe:Bxe_A1694"/>
<dbReference type="PATRIC" id="fig|266265.5.peg.2853"/>
<dbReference type="eggNOG" id="COG1043">
    <property type="taxonomic scope" value="Bacteria"/>
</dbReference>
<dbReference type="OrthoDB" id="9807278at2"/>
<dbReference type="UniPathway" id="UPA00359">
    <property type="reaction ID" value="UER00477"/>
</dbReference>
<dbReference type="Proteomes" id="UP000001817">
    <property type="component" value="Chromosome 1"/>
</dbReference>
<dbReference type="GO" id="GO:0005737">
    <property type="term" value="C:cytoplasm"/>
    <property type="evidence" value="ECO:0007669"/>
    <property type="project" value="UniProtKB-SubCell"/>
</dbReference>
<dbReference type="GO" id="GO:0016020">
    <property type="term" value="C:membrane"/>
    <property type="evidence" value="ECO:0007669"/>
    <property type="project" value="GOC"/>
</dbReference>
<dbReference type="GO" id="GO:0008780">
    <property type="term" value="F:acyl-[acyl-carrier-protein]-UDP-N-acetylglucosamine O-acyltransferase activity"/>
    <property type="evidence" value="ECO:0007669"/>
    <property type="project" value="UniProtKB-UniRule"/>
</dbReference>
<dbReference type="GO" id="GO:0009245">
    <property type="term" value="P:lipid A biosynthetic process"/>
    <property type="evidence" value="ECO:0007669"/>
    <property type="project" value="UniProtKB-UniRule"/>
</dbReference>
<dbReference type="CDD" id="cd03351">
    <property type="entry name" value="LbH_UDP-GlcNAc_AT"/>
    <property type="match status" value="1"/>
</dbReference>
<dbReference type="Gene3D" id="2.160.10.10">
    <property type="entry name" value="Hexapeptide repeat proteins"/>
    <property type="match status" value="1"/>
</dbReference>
<dbReference type="Gene3D" id="1.20.1180.10">
    <property type="entry name" value="Udp N-acetylglucosamine O-acyltransferase, C-terminal domain"/>
    <property type="match status" value="1"/>
</dbReference>
<dbReference type="HAMAP" id="MF_00387">
    <property type="entry name" value="LpxA"/>
    <property type="match status" value="1"/>
</dbReference>
<dbReference type="InterPro" id="IPR029098">
    <property type="entry name" value="Acetyltransf_C"/>
</dbReference>
<dbReference type="InterPro" id="IPR037157">
    <property type="entry name" value="Acetyltransf_C_sf"/>
</dbReference>
<dbReference type="InterPro" id="IPR001451">
    <property type="entry name" value="Hexapep"/>
</dbReference>
<dbReference type="InterPro" id="IPR010137">
    <property type="entry name" value="Lipid_A_LpxA"/>
</dbReference>
<dbReference type="InterPro" id="IPR011004">
    <property type="entry name" value="Trimer_LpxA-like_sf"/>
</dbReference>
<dbReference type="NCBIfam" id="TIGR01852">
    <property type="entry name" value="lipid_A_lpxA"/>
    <property type="match status" value="1"/>
</dbReference>
<dbReference type="NCBIfam" id="NF003657">
    <property type="entry name" value="PRK05289.1"/>
    <property type="match status" value="1"/>
</dbReference>
<dbReference type="PANTHER" id="PTHR43480">
    <property type="entry name" value="ACYL-[ACYL-CARRIER-PROTEIN]--UDP-N-ACETYLGLUCOSAMINE O-ACYLTRANSFERASE"/>
    <property type="match status" value="1"/>
</dbReference>
<dbReference type="PANTHER" id="PTHR43480:SF1">
    <property type="entry name" value="ACYL-[ACYL-CARRIER-PROTEIN]--UDP-N-ACETYLGLUCOSAMINE O-ACYLTRANSFERASE, MITOCHONDRIAL-RELATED"/>
    <property type="match status" value="1"/>
</dbReference>
<dbReference type="Pfam" id="PF13720">
    <property type="entry name" value="Acetyltransf_11"/>
    <property type="match status" value="1"/>
</dbReference>
<dbReference type="Pfam" id="PF00132">
    <property type="entry name" value="Hexapep"/>
    <property type="match status" value="1"/>
</dbReference>
<dbReference type="PIRSF" id="PIRSF000456">
    <property type="entry name" value="UDP-GlcNAc_acltr"/>
    <property type="match status" value="1"/>
</dbReference>
<dbReference type="SUPFAM" id="SSF51161">
    <property type="entry name" value="Trimeric LpxA-like enzymes"/>
    <property type="match status" value="1"/>
</dbReference>
<dbReference type="PROSITE" id="PS00101">
    <property type="entry name" value="HEXAPEP_TRANSFERASES"/>
    <property type="match status" value="1"/>
</dbReference>
<proteinExistence type="inferred from homology"/>
<reference key="1">
    <citation type="journal article" date="2006" name="Proc. Natl. Acad. Sci. U.S.A.">
        <title>Burkholderia xenovorans LB400 harbors a multi-replicon, 9.73-Mbp genome shaped for versatility.</title>
        <authorList>
            <person name="Chain P.S.G."/>
            <person name="Denef V.J."/>
            <person name="Konstantinidis K.T."/>
            <person name="Vergez L.M."/>
            <person name="Agullo L."/>
            <person name="Reyes V.L."/>
            <person name="Hauser L."/>
            <person name="Cordova M."/>
            <person name="Gomez L."/>
            <person name="Gonzalez M."/>
            <person name="Land M."/>
            <person name="Lao V."/>
            <person name="Larimer F."/>
            <person name="LiPuma J.J."/>
            <person name="Mahenthiralingam E."/>
            <person name="Malfatti S.A."/>
            <person name="Marx C.J."/>
            <person name="Parnell J.J."/>
            <person name="Ramette A."/>
            <person name="Richardson P."/>
            <person name="Seeger M."/>
            <person name="Smith D."/>
            <person name="Spilker T."/>
            <person name="Sul W.J."/>
            <person name="Tsoi T.V."/>
            <person name="Ulrich L.E."/>
            <person name="Zhulin I.B."/>
            <person name="Tiedje J.M."/>
        </authorList>
    </citation>
    <scope>NUCLEOTIDE SEQUENCE [LARGE SCALE GENOMIC DNA]</scope>
    <source>
        <strain>LB400</strain>
    </source>
</reference>
<organism>
    <name type="scientific">Paraburkholderia xenovorans (strain LB400)</name>
    <dbReference type="NCBI Taxonomy" id="266265"/>
    <lineage>
        <taxon>Bacteria</taxon>
        <taxon>Pseudomonadati</taxon>
        <taxon>Pseudomonadota</taxon>
        <taxon>Betaproteobacteria</taxon>
        <taxon>Burkholderiales</taxon>
        <taxon>Burkholderiaceae</taxon>
        <taxon>Paraburkholderia</taxon>
    </lineage>
</organism>
<comment type="function">
    <text evidence="1">Involved in the biosynthesis of lipid A, a phosphorylated glycolipid that anchors the lipopolysaccharide to the outer membrane of the cell.</text>
</comment>
<comment type="catalytic activity">
    <reaction evidence="1">
        <text>a (3R)-hydroxyacyl-[ACP] + UDP-N-acetyl-alpha-D-glucosamine = a UDP-3-O-[(3R)-3-hydroxyacyl]-N-acetyl-alpha-D-glucosamine + holo-[ACP]</text>
        <dbReference type="Rhea" id="RHEA:67812"/>
        <dbReference type="Rhea" id="RHEA-COMP:9685"/>
        <dbReference type="Rhea" id="RHEA-COMP:9945"/>
        <dbReference type="ChEBI" id="CHEBI:57705"/>
        <dbReference type="ChEBI" id="CHEBI:64479"/>
        <dbReference type="ChEBI" id="CHEBI:78827"/>
        <dbReference type="ChEBI" id="CHEBI:173225"/>
        <dbReference type="EC" id="2.3.1.129"/>
    </reaction>
</comment>
<comment type="pathway">
    <text evidence="1">Glycolipid biosynthesis; lipid IV(A) biosynthesis; lipid IV(A) from (3R)-3-hydroxytetradecanoyl-[acyl-carrier-protein] and UDP-N-acetyl-alpha-D-glucosamine: step 1/6.</text>
</comment>
<comment type="subunit">
    <text evidence="1">Homotrimer.</text>
</comment>
<comment type="subcellular location">
    <subcellularLocation>
        <location evidence="1">Cytoplasm</location>
    </subcellularLocation>
</comment>
<comment type="similarity">
    <text evidence="1">Belongs to the transferase hexapeptide repeat family. LpxA subfamily.</text>
</comment>
<gene>
    <name evidence="1" type="primary">lpxA</name>
    <name type="ordered locus">Bxeno_A2723</name>
    <name type="ORF">Bxe_A1694</name>
</gene>
<accession>Q13XC8</accession>
<evidence type="ECO:0000255" key="1">
    <source>
        <dbReference type="HAMAP-Rule" id="MF_00387"/>
    </source>
</evidence>
<name>LPXA_PARXL</name>
<protein>
    <recommendedName>
        <fullName evidence="1">Acyl-[acyl-carrier-protein]--UDP-N-acetylglucosamine O-acyltransferase</fullName>
        <shortName evidence="1">UDP-N-acetylglucosamine acyltransferase</shortName>
        <ecNumber evidence="1">2.3.1.129</ecNumber>
    </recommendedName>
</protein>
<sequence length="262" mass="27759">MSRIHPTAIVEPGAQLDESVEVGPYAVIGAHVTIGARTTVGSHSVIEGHTTLGEDNRIGHYASVGGRPQDMKYKDEPTRLVIGSRNTIREFTTIHTGTVQDSGVTTLGDDNWIMAYVHIGHDCHVGNNVILSSNAQMAGHVIIGDHAIVGGMSGVHQFVRIGAHSMLGGASALVQDIPPFVIAAGNKAEPHGINVEGLRRRGFSPDAISALRAAYRVLYKNGLSLEEAKVQLRELASAGGDGDEPVQTLLAFVEASQRGIIR</sequence>
<feature type="chain" id="PRO_1000013162" description="Acyl-[acyl-carrier-protein]--UDP-N-acetylglucosamine O-acyltransferase">
    <location>
        <begin position="1"/>
        <end position="262"/>
    </location>
</feature>